<proteinExistence type="evidence at transcript level"/>
<evidence type="ECO:0000255" key="1">
    <source>
        <dbReference type="PROSITE-ProRule" id="PRU00080"/>
    </source>
</evidence>
<evidence type="ECO:0000305" key="2"/>
<feature type="chain" id="PRO_0000272216" description="F-box protein PP2-B7">
    <location>
        <begin position="1"/>
        <end position="307"/>
    </location>
</feature>
<feature type="domain" description="F-box" evidence="1">
    <location>
        <begin position="37"/>
        <end position="83"/>
    </location>
</feature>
<feature type="sequence conflict" description="In Ref. 3; AAO11661." evidence="2" ref="3">
    <original>T</original>
    <variation>S</variation>
    <location>
        <position position="285"/>
    </location>
</feature>
<feature type="sequence conflict" description="In Ref. 3; AAO11661." evidence="2" ref="3">
    <original>Q</original>
    <variation>R</variation>
    <location>
        <position position="292"/>
    </location>
</feature>
<gene>
    <name type="primary">PP2B7</name>
    <name type="ordered locus">At2g02320</name>
    <name type="ORF">T16F16.11</name>
</gene>
<reference key="1">
    <citation type="journal article" date="1999" name="Nature">
        <title>Sequence and analysis of chromosome 2 of the plant Arabidopsis thaliana.</title>
        <authorList>
            <person name="Lin X."/>
            <person name="Kaul S."/>
            <person name="Rounsley S.D."/>
            <person name="Shea T.P."/>
            <person name="Benito M.-I."/>
            <person name="Town C.D."/>
            <person name="Fujii C.Y."/>
            <person name="Mason T.M."/>
            <person name="Bowman C.L."/>
            <person name="Barnstead M.E."/>
            <person name="Feldblyum T.V."/>
            <person name="Buell C.R."/>
            <person name="Ketchum K.A."/>
            <person name="Lee J.J."/>
            <person name="Ronning C.M."/>
            <person name="Koo H.L."/>
            <person name="Moffat K.S."/>
            <person name="Cronin L.A."/>
            <person name="Shen M."/>
            <person name="Pai G."/>
            <person name="Van Aken S."/>
            <person name="Umayam L."/>
            <person name="Tallon L.J."/>
            <person name="Gill J.E."/>
            <person name="Adams M.D."/>
            <person name="Carrera A.J."/>
            <person name="Creasy T.H."/>
            <person name="Goodman H.M."/>
            <person name="Somerville C.R."/>
            <person name="Copenhaver G.P."/>
            <person name="Preuss D."/>
            <person name="Nierman W.C."/>
            <person name="White O."/>
            <person name="Eisen J.A."/>
            <person name="Salzberg S.L."/>
            <person name="Fraser C.M."/>
            <person name="Venter J.C."/>
        </authorList>
    </citation>
    <scope>NUCLEOTIDE SEQUENCE [LARGE SCALE GENOMIC DNA]</scope>
    <source>
        <strain>cv. Columbia</strain>
    </source>
</reference>
<reference key="2">
    <citation type="journal article" date="2017" name="Plant J.">
        <title>Araport11: a complete reannotation of the Arabidopsis thaliana reference genome.</title>
        <authorList>
            <person name="Cheng C.Y."/>
            <person name="Krishnakumar V."/>
            <person name="Chan A.P."/>
            <person name="Thibaud-Nissen F."/>
            <person name="Schobel S."/>
            <person name="Town C.D."/>
        </authorList>
    </citation>
    <scope>GENOME REANNOTATION</scope>
    <source>
        <strain>cv. Columbia</strain>
    </source>
</reference>
<reference key="3">
    <citation type="journal article" date="2005" name="Plant Physiol.">
        <title>Analysis of the cDNAs of hypothetical genes on Arabidopsis chromosome 2 reveals numerous transcript variants.</title>
        <authorList>
            <person name="Xiao Y.-L."/>
            <person name="Smith S.R."/>
            <person name="Ishmael N."/>
            <person name="Redman J.C."/>
            <person name="Kumar N."/>
            <person name="Monaghan E.L."/>
            <person name="Ayele M."/>
            <person name="Haas B.J."/>
            <person name="Wu H.C."/>
            <person name="Town C.D."/>
        </authorList>
    </citation>
    <scope>NUCLEOTIDE SEQUENCE [LARGE SCALE MRNA]</scope>
    <source>
        <strain>cv. Columbia</strain>
    </source>
</reference>
<reference key="4">
    <citation type="submission" date="2004-06" db="EMBL/GenBank/DDBJ databases">
        <authorList>
            <person name="Underwood B.A."/>
            <person name="Xiao Y.-L."/>
            <person name="Moskal W.A. Jr."/>
            <person name="Monaghan E.L."/>
            <person name="Wang W."/>
            <person name="Redman J.C."/>
            <person name="Wu H.C."/>
            <person name="Utterback T."/>
            <person name="Town C.D."/>
        </authorList>
    </citation>
    <scope>NUCLEOTIDE SEQUENCE [LARGE SCALE MRNA]</scope>
    <source>
        <strain>cv. Columbia</strain>
    </source>
</reference>
<reference key="5">
    <citation type="journal article" date="2003" name="Plant Physiol.">
        <title>Diversity of the superfamily of phloem lectins (phloem protein 2) in angiosperms.</title>
        <authorList>
            <person name="Dinant S."/>
            <person name="Clark A.M."/>
            <person name="Zhu Y."/>
            <person name="Vilaine F."/>
            <person name="Palauqui J.-C."/>
            <person name="Kusiak C."/>
            <person name="Thompson G.A."/>
        </authorList>
    </citation>
    <scope>GENE FAMILY</scope>
    <scope>NOMENCLATURE</scope>
</reference>
<protein>
    <recommendedName>
        <fullName>F-box protein PP2-B7</fullName>
    </recommendedName>
    <alternativeName>
        <fullName>Protein PHLOEM PROTEIN 2-LIKE B7</fullName>
        <shortName>AtPP2-B7</shortName>
    </alternativeName>
</protein>
<keyword id="KW-1185">Reference proteome</keyword>
<sequence>MTKTRCMHVHFRKILQRVKKTLRLSASDQQSQGVTEPLSLGDLPEECISLIISFTSPRDACVFALVSKTFESAVQSDIVWEKFIPPEYESLLSRSQHFSSKKELFFALCDESVLINVSKKDLWIEKATGKRCMMLSASALNLSTHHTWKWITNPVSAWLETVPELLTTRWFEIRCRTNTRFLSPRTRYSVYIVFLKADICYGFAYVAMEAVVRMVGHELSESCRRYVCFHEAMEWQFLTRKNLVNPERREDGWMEIEIGEFFNEGAFRNNDEIEMSVSETTQRNTKRGLIIQGIEIRPTKKPGNEMP</sequence>
<organism>
    <name type="scientific">Arabidopsis thaliana</name>
    <name type="common">Mouse-ear cress</name>
    <dbReference type="NCBI Taxonomy" id="3702"/>
    <lineage>
        <taxon>Eukaryota</taxon>
        <taxon>Viridiplantae</taxon>
        <taxon>Streptophyta</taxon>
        <taxon>Embryophyta</taxon>
        <taxon>Tracheophyta</taxon>
        <taxon>Spermatophyta</taxon>
        <taxon>Magnoliopsida</taxon>
        <taxon>eudicotyledons</taxon>
        <taxon>Gunneridae</taxon>
        <taxon>Pentapetalae</taxon>
        <taxon>rosids</taxon>
        <taxon>malvids</taxon>
        <taxon>Brassicales</taxon>
        <taxon>Brassicaceae</taxon>
        <taxon>Camelineae</taxon>
        <taxon>Arabidopsis</taxon>
    </lineage>
</organism>
<accession>Q9ZVQ9</accession>
<accession>Q8GUU0</accession>
<dbReference type="EMBL" id="AC005312">
    <property type="protein sequence ID" value="AAC78515.1"/>
    <property type="molecule type" value="Genomic_DNA"/>
</dbReference>
<dbReference type="EMBL" id="CP002685">
    <property type="protein sequence ID" value="AEC05566.1"/>
    <property type="molecule type" value="Genomic_DNA"/>
</dbReference>
<dbReference type="EMBL" id="AY168990">
    <property type="protein sequence ID" value="AAO11661.1"/>
    <property type="molecule type" value="mRNA"/>
</dbReference>
<dbReference type="EMBL" id="AY649301">
    <property type="protein sequence ID" value="AAT69218.1"/>
    <property type="molecule type" value="mRNA"/>
</dbReference>
<dbReference type="PIR" id="D84435">
    <property type="entry name" value="D84435"/>
</dbReference>
<dbReference type="SMR" id="Q9ZVQ9"/>
<dbReference type="BioGRID" id="166">
    <property type="interactions" value="4"/>
</dbReference>
<dbReference type="PaxDb" id="3702-AT2G02320.1"/>
<dbReference type="EnsemblPlants" id="AT2G02320.1">
    <property type="protein sequence ID" value="AT2G02320.1"/>
    <property type="gene ID" value="AT2G02320"/>
</dbReference>
<dbReference type="GeneID" id="814763"/>
<dbReference type="Gramene" id="AT2G02320.1">
    <property type="protein sequence ID" value="AT2G02320.1"/>
    <property type="gene ID" value="AT2G02320"/>
</dbReference>
<dbReference type="KEGG" id="ath:AT2G02320"/>
<dbReference type="Araport" id="AT2G02320"/>
<dbReference type="TAIR" id="AT2G02320">
    <property type="gene designation" value="PP2-B7"/>
</dbReference>
<dbReference type="eggNOG" id="ENOG502QRA4">
    <property type="taxonomic scope" value="Eukaryota"/>
</dbReference>
<dbReference type="HOGENOM" id="CLU_050973_0_0_1"/>
<dbReference type="InParanoid" id="Q9ZVQ9"/>
<dbReference type="OMA" id="FIYIRER"/>
<dbReference type="PhylomeDB" id="Q9ZVQ9"/>
<dbReference type="PRO" id="PR:Q9ZVQ9"/>
<dbReference type="Proteomes" id="UP000006548">
    <property type="component" value="Chromosome 2"/>
</dbReference>
<dbReference type="ExpressionAtlas" id="Q9ZVQ9">
    <property type="expression patterns" value="baseline and differential"/>
</dbReference>
<dbReference type="GO" id="GO:0030246">
    <property type="term" value="F:carbohydrate binding"/>
    <property type="evidence" value="ECO:0000250"/>
    <property type="project" value="TAIR"/>
</dbReference>
<dbReference type="CDD" id="cd22162">
    <property type="entry name" value="F-box_AtSKIP3-like"/>
    <property type="match status" value="1"/>
</dbReference>
<dbReference type="FunFam" id="1.20.1280.50:FF:000112">
    <property type="entry name" value="F-box protein PP2-B1"/>
    <property type="match status" value="1"/>
</dbReference>
<dbReference type="Gene3D" id="1.20.1280.50">
    <property type="match status" value="1"/>
</dbReference>
<dbReference type="InterPro" id="IPR036047">
    <property type="entry name" value="F-box-like_dom_sf"/>
</dbReference>
<dbReference type="InterPro" id="IPR001810">
    <property type="entry name" value="F-box_dom"/>
</dbReference>
<dbReference type="InterPro" id="IPR025886">
    <property type="entry name" value="PP2-like"/>
</dbReference>
<dbReference type="PANTHER" id="PTHR32278">
    <property type="entry name" value="F-BOX DOMAIN-CONTAINING PROTEIN"/>
    <property type="match status" value="1"/>
</dbReference>
<dbReference type="PANTHER" id="PTHR32278:SF119">
    <property type="entry name" value="F-BOX PROTEIN PP2-B10-RELATED"/>
    <property type="match status" value="1"/>
</dbReference>
<dbReference type="Pfam" id="PF00646">
    <property type="entry name" value="F-box"/>
    <property type="match status" value="1"/>
</dbReference>
<dbReference type="Pfam" id="PF14299">
    <property type="entry name" value="PP2"/>
    <property type="match status" value="1"/>
</dbReference>
<dbReference type="SMART" id="SM00256">
    <property type="entry name" value="FBOX"/>
    <property type="match status" value="1"/>
</dbReference>
<dbReference type="SUPFAM" id="SSF81383">
    <property type="entry name" value="F-box domain"/>
    <property type="match status" value="1"/>
</dbReference>
<dbReference type="PROSITE" id="PS50181">
    <property type="entry name" value="FBOX"/>
    <property type="match status" value="1"/>
</dbReference>
<name>PP2B7_ARATH</name>